<reference key="1">
    <citation type="journal article" date="2004" name="Nature">
        <title>Genome sequence of the Brown Norway rat yields insights into mammalian evolution.</title>
        <authorList>
            <person name="Gibbs R.A."/>
            <person name="Weinstock G.M."/>
            <person name="Metzker M.L."/>
            <person name="Muzny D.M."/>
            <person name="Sodergren E.J."/>
            <person name="Scherer S."/>
            <person name="Scott G."/>
            <person name="Steffen D."/>
            <person name="Worley K.C."/>
            <person name="Burch P.E."/>
            <person name="Okwuonu G."/>
            <person name="Hines S."/>
            <person name="Lewis L."/>
            <person name="Deramo C."/>
            <person name="Delgado O."/>
            <person name="Dugan-Rocha S."/>
            <person name="Miner G."/>
            <person name="Morgan M."/>
            <person name="Hawes A."/>
            <person name="Gill R."/>
            <person name="Holt R.A."/>
            <person name="Adams M.D."/>
            <person name="Amanatides P.G."/>
            <person name="Baden-Tillson H."/>
            <person name="Barnstead M."/>
            <person name="Chin S."/>
            <person name="Evans C.A."/>
            <person name="Ferriera S."/>
            <person name="Fosler C."/>
            <person name="Glodek A."/>
            <person name="Gu Z."/>
            <person name="Jennings D."/>
            <person name="Kraft C.L."/>
            <person name="Nguyen T."/>
            <person name="Pfannkoch C.M."/>
            <person name="Sitter C."/>
            <person name="Sutton G.G."/>
            <person name="Venter J.C."/>
            <person name="Woodage T."/>
            <person name="Smith D."/>
            <person name="Lee H.-M."/>
            <person name="Gustafson E."/>
            <person name="Cahill P."/>
            <person name="Kana A."/>
            <person name="Doucette-Stamm L."/>
            <person name="Weinstock K."/>
            <person name="Fechtel K."/>
            <person name="Weiss R.B."/>
            <person name="Dunn D.M."/>
            <person name="Green E.D."/>
            <person name="Blakesley R.W."/>
            <person name="Bouffard G.G."/>
            <person name="De Jong P.J."/>
            <person name="Osoegawa K."/>
            <person name="Zhu B."/>
            <person name="Marra M."/>
            <person name="Schein J."/>
            <person name="Bosdet I."/>
            <person name="Fjell C."/>
            <person name="Jones S."/>
            <person name="Krzywinski M."/>
            <person name="Mathewson C."/>
            <person name="Siddiqui A."/>
            <person name="Wye N."/>
            <person name="McPherson J."/>
            <person name="Zhao S."/>
            <person name="Fraser C.M."/>
            <person name="Shetty J."/>
            <person name="Shatsman S."/>
            <person name="Geer K."/>
            <person name="Chen Y."/>
            <person name="Abramzon S."/>
            <person name="Nierman W.C."/>
            <person name="Havlak P.H."/>
            <person name="Chen R."/>
            <person name="Durbin K.J."/>
            <person name="Egan A."/>
            <person name="Ren Y."/>
            <person name="Song X.-Z."/>
            <person name="Li B."/>
            <person name="Liu Y."/>
            <person name="Qin X."/>
            <person name="Cawley S."/>
            <person name="Cooney A.J."/>
            <person name="D'Souza L.M."/>
            <person name="Martin K."/>
            <person name="Wu J.Q."/>
            <person name="Gonzalez-Garay M.L."/>
            <person name="Jackson A.R."/>
            <person name="Kalafus K.J."/>
            <person name="McLeod M.P."/>
            <person name="Milosavljevic A."/>
            <person name="Virk D."/>
            <person name="Volkov A."/>
            <person name="Wheeler D.A."/>
            <person name="Zhang Z."/>
            <person name="Bailey J.A."/>
            <person name="Eichler E.E."/>
            <person name="Tuzun E."/>
            <person name="Birney E."/>
            <person name="Mongin E."/>
            <person name="Ureta-Vidal A."/>
            <person name="Woodwark C."/>
            <person name="Zdobnov E."/>
            <person name="Bork P."/>
            <person name="Suyama M."/>
            <person name="Torrents D."/>
            <person name="Alexandersson M."/>
            <person name="Trask B.J."/>
            <person name="Young J.M."/>
            <person name="Huang H."/>
            <person name="Wang H."/>
            <person name="Xing H."/>
            <person name="Daniels S."/>
            <person name="Gietzen D."/>
            <person name="Schmidt J."/>
            <person name="Stevens K."/>
            <person name="Vitt U."/>
            <person name="Wingrove J."/>
            <person name="Camara F."/>
            <person name="Mar Alba M."/>
            <person name="Abril J.F."/>
            <person name="Guigo R."/>
            <person name="Smit A."/>
            <person name="Dubchak I."/>
            <person name="Rubin E.M."/>
            <person name="Couronne O."/>
            <person name="Poliakov A."/>
            <person name="Huebner N."/>
            <person name="Ganten D."/>
            <person name="Goesele C."/>
            <person name="Hummel O."/>
            <person name="Kreitler T."/>
            <person name="Lee Y.-A."/>
            <person name="Monti J."/>
            <person name="Schulz H."/>
            <person name="Zimdahl H."/>
            <person name="Himmelbauer H."/>
            <person name="Lehrach H."/>
            <person name="Jacob H.J."/>
            <person name="Bromberg S."/>
            <person name="Gullings-Handley J."/>
            <person name="Jensen-Seaman M.I."/>
            <person name="Kwitek A.E."/>
            <person name="Lazar J."/>
            <person name="Pasko D."/>
            <person name="Tonellato P.J."/>
            <person name="Twigger S."/>
            <person name="Ponting C.P."/>
            <person name="Duarte J.M."/>
            <person name="Rice S."/>
            <person name="Goodstadt L."/>
            <person name="Beatson S.A."/>
            <person name="Emes R.D."/>
            <person name="Winter E.E."/>
            <person name="Webber C."/>
            <person name="Brandt P."/>
            <person name="Nyakatura G."/>
            <person name="Adetobi M."/>
            <person name="Chiaromonte F."/>
            <person name="Elnitski L."/>
            <person name="Eswara P."/>
            <person name="Hardison R.C."/>
            <person name="Hou M."/>
            <person name="Kolbe D."/>
            <person name="Makova K."/>
            <person name="Miller W."/>
            <person name="Nekrutenko A."/>
            <person name="Riemer C."/>
            <person name="Schwartz S."/>
            <person name="Taylor J."/>
            <person name="Yang S."/>
            <person name="Zhang Y."/>
            <person name="Lindpaintner K."/>
            <person name="Andrews T.D."/>
            <person name="Caccamo M."/>
            <person name="Clamp M."/>
            <person name="Clarke L."/>
            <person name="Curwen V."/>
            <person name="Durbin R.M."/>
            <person name="Eyras E."/>
            <person name="Searle S.M."/>
            <person name="Cooper G.M."/>
            <person name="Batzoglou S."/>
            <person name="Brudno M."/>
            <person name="Sidow A."/>
            <person name="Stone E.A."/>
            <person name="Payseur B.A."/>
            <person name="Bourque G."/>
            <person name="Lopez-Otin C."/>
            <person name="Puente X.S."/>
            <person name="Chakrabarti K."/>
            <person name="Chatterji S."/>
            <person name="Dewey C."/>
            <person name="Pachter L."/>
            <person name="Bray N."/>
            <person name="Yap V.B."/>
            <person name="Caspi A."/>
            <person name="Tesler G."/>
            <person name="Pevzner P.A."/>
            <person name="Haussler D."/>
            <person name="Roskin K.M."/>
            <person name="Baertsch R."/>
            <person name="Clawson H."/>
            <person name="Furey T.S."/>
            <person name="Hinrichs A.S."/>
            <person name="Karolchik D."/>
            <person name="Kent W.J."/>
            <person name="Rosenbloom K.R."/>
            <person name="Trumbower H."/>
            <person name="Weirauch M."/>
            <person name="Cooper D.N."/>
            <person name="Stenson P.D."/>
            <person name="Ma B."/>
            <person name="Brent M."/>
            <person name="Arumugam M."/>
            <person name="Shteynberg D."/>
            <person name="Copley R.R."/>
            <person name="Taylor M.S."/>
            <person name="Riethman H."/>
            <person name="Mudunuri U."/>
            <person name="Peterson J."/>
            <person name="Guyer M."/>
            <person name="Felsenfeld A."/>
            <person name="Old S."/>
            <person name="Mockrin S."/>
            <person name="Collins F.S."/>
        </authorList>
    </citation>
    <scope>NUCLEOTIDE SEQUENCE [LARGE SCALE GENOMIC DNA]</scope>
    <source>
        <strain>Brown Norway</strain>
    </source>
</reference>
<reference key="2">
    <citation type="journal article" date="1997" name="Proc. Natl. Acad. Sci. U.S.A.">
        <title>The SH3p4/Sh3p8/SH3p13 protein family: binding partners for synaptojanin and dynamin via a Grb2-like Src homology 3 domain.</title>
        <authorList>
            <person name="Ringstad N."/>
            <person name="Nemoto Y."/>
            <person name="De Camilli P."/>
        </authorList>
    </citation>
    <scope>NUCLEOTIDE SEQUENCE [MRNA] OF 57-347</scope>
    <scope>SUBCELLULAR LOCATION</scope>
    <scope>TISSUE SPECIFICITY</scope>
    <scope>INTERACTION WITH DNM1 AND SYNJ1</scope>
    <source>
        <tissue>Brain</tissue>
    </source>
</reference>
<reference key="3">
    <citation type="submission" date="1997-10" db="EMBL/GenBank/DDBJ databases">
        <authorList>
            <person name="Yamagata K."/>
        </authorList>
    </citation>
    <scope>NUCLEOTIDE SEQUENCE [MRNA] OF 70-347</scope>
</reference>
<reference key="4">
    <citation type="journal article" date="2004" name="J. Biol. Chem.">
        <title>Inhibitory role of endophilin 3 in receptor-mediated endocytosis.</title>
        <authorList>
            <person name="Sugiura H."/>
            <person name="Iwata K."/>
            <person name="Matsuoka M."/>
            <person name="Hayashi H."/>
            <person name="Takemiya T."/>
            <person name="Yasuda S."/>
            <person name="Ichikawa M."/>
            <person name="Yamauchi T."/>
            <person name="Mehlen P."/>
            <person name="Haga T."/>
            <person name="Yamagata K."/>
        </authorList>
    </citation>
    <scope>FUNCTION</scope>
    <scope>TISSUE SPECIFICITY</scope>
    <scope>INTERACTION WITH DNM1 AND SYNJ1</scope>
</reference>
<reference key="5">
    <citation type="journal article" date="2006" name="Neuron">
        <title>Arc/Arg3.1 interacts with the endocytic machinery to regulate AMPA receptor trafficking.</title>
        <authorList>
            <person name="Chowdhury S."/>
            <person name="Shepherd J.D."/>
            <person name="Okuno H."/>
            <person name="Lyford G."/>
            <person name="Petralia R.S."/>
            <person name="Plath N."/>
            <person name="Kuhl D."/>
            <person name="Huganir R.L."/>
            <person name="Worley P.F."/>
        </authorList>
    </citation>
    <scope>SUBCELLULAR LOCATION</scope>
    <scope>INTERACTION WITH ARC</scope>
</reference>
<organism>
    <name type="scientific">Rattus norvegicus</name>
    <name type="common">Rat</name>
    <dbReference type="NCBI Taxonomy" id="10116"/>
    <lineage>
        <taxon>Eukaryota</taxon>
        <taxon>Metazoa</taxon>
        <taxon>Chordata</taxon>
        <taxon>Craniata</taxon>
        <taxon>Vertebrata</taxon>
        <taxon>Euteleostomi</taxon>
        <taxon>Mammalia</taxon>
        <taxon>Eutheria</taxon>
        <taxon>Euarchontoglires</taxon>
        <taxon>Glires</taxon>
        <taxon>Rodentia</taxon>
        <taxon>Myomorpha</taxon>
        <taxon>Muroidea</taxon>
        <taxon>Muridae</taxon>
        <taxon>Murinae</taxon>
        <taxon>Rattus</taxon>
    </lineage>
</organism>
<gene>
    <name type="primary">Sh3gl3</name>
    <name type="synonym">Sh3d2c1</name>
    <name type="synonym">Sh3p13</name>
</gene>
<evidence type="ECO:0000250" key="1"/>
<evidence type="ECO:0000255" key="2"/>
<evidence type="ECO:0000255" key="3">
    <source>
        <dbReference type="PROSITE-ProRule" id="PRU00192"/>
    </source>
</evidence>
<evidence type="ECO:0000255" key="4">
    <source>
        <dbReference type="PROSITE-ProRule" id="PRU00361"/>
    </source>
</evidence>
<evidence type="ECO:0000256" key="5">
    <source>
        <dbReference type="SAM" id="MobiDB-lite"/>
    </source>
</evidence>
<evidence type="ECO:0000269" key="6">
    <source>
    </source>
</evidence>
<evidence type="ECO:0000269" key="7">
    <source>
    </source>
</evidence>
<evidence type="ECO:0000269" key="8">
    <source>
    </source>
</evidence>
<evidence type="ECO:0000305" key="9"/>
<evidence type="ECO:0000305" key="10">
    <source>
    </source>
</evidence>
<name>SH3G3_RAT</name>
<accession>O35180</accession>
<accession>O35104</accession>
<keyword id="KW-0175">Coiled coil</keyword>
<keyword id="KW-0963">Cytoplasm</keyword>
<keyword id="KW-0254">Endocytosis</keyword>
<keyword id="KW-0967">Endosome</keyword>
<keyword id="KW-0446">Lipid-binding</keyword>
<keyword id="KW-0472">Membrane</keyword>
<keyword id="KW-1185">Reference proteome</keyword>
<keyword id="KW-0728">SH3 domain</keyword>
<sequence length="347" mass="39166">MSVAGLKKQFHKASQLFSEKISGAEGTKLDEEFLDMEKKIDITSKAVAEILSKATEYLQPNPAYRAKLGMLNTMSKLRGQVKATGYPQTEGLLGDCMLKYGRELGEDSAFGNSLVEVGEALKLMAEVKDSLDINVKQTFIDPLQLLQDKDLKEIGHHLRKLEGRRLDYDYKKKRVGKIPEEEIRQAVEKFEESKELAERSMFNFLENDVEQVSQLAVFVEAALDYHRQSTEILQELQNKLELRIALASQVPRRDYMPKPVNTSSTNANGVEPSSSSKLTGTDIPSDQPCCRGLYDFEPENEGELGFKEGDIITLTNQIDENWYEGMLRGESGFFPINYVEVIVPLPR</sequence>
<dbReference type="EMBL" id="AC128742">
    <property type="status" value="NOT_ANNOTATED_CDS"/>
    <property type="molecule type" value="Genomic_DNA"/>
</dbReference>
<dbReference type="EMBL" id="AF009604">
    <property type="protein sequence ID" value="AAC14884.1"/>
    <property type="molecule type" value="mRNA"/>
</dbReference>
<dbReference type="EMBL" id="AB008159">
    <property type="protein sequence ID" value="BAA22920.2"/>
    <property type="molecule type" value="mRNA"/>
</dbReference>
<dbReference type="RefSeq" id="NP_001401305.1">
    <property type="nucleotide sequence ID" value="NM_001414376.1"/>
</dbReference>
<dbReference type="RefSeq" id="XP_006229542.1">
    <property type="nucleotide sequence ID" value="XM_006229480.3"/>
</dbReference>
<dbReference type="RefSeq" id="XP_006229547.1">
    <property type="nucleotide sequence ID" value="XM_006229485.1"/>
</dbReference>
<dbReference type="SMR" id="O35180"/>
<dbReference type="BioGRID" id="249696">
    <property type="interactions" value="1"/>
</dbReference>
<dbReference type="ELM" id="O35180"/>
<dbReference type="FunCoup" id="O35180">
    <property type="interactions" value="1010"/>
</dbReference>
<dbReference type="IntAct" id="O35180">
    <property type="interactions" value="3"/>
</dbReference>
<dbReference type="STRING" id="10116.ENSRNOP00000072673"/>
<dbReference type="iPTMnet" id="O35180"/>
<dbReference type="PhosphoSitePlus" id="O35180"/>
<dbReference type="PaxDb" id="10116-ENSRNOP00000026870"/>
<dbReference type="Ensembl" id="ENSRNOT00000096616.1">
    <property type="protein sequence ID" value="ENSRNOP00000095576.1"/>
    <property type="gene ID" value="ENSRNOG00000019776.7"/>
</dbReference>
<dbReference type="GeneID" id="81921"/>
<dbReference type="AGR" id="RGD:620578"/>
<dbReference type="CTD" id="6457"/>
<dbReference type="RGD" id="620578">
    <property type="gene designation" value="Sh3gl3"/>
</dbReference>
<dbReference type="eggNOG" id="KOG1118">
    <property type="taxonomic scope" value="Eukaryota"/>
</dbReference>
<dbReference type="GeneTree" id="ENSGT00940000157398"/>
<dbReference type="HOGENOM" id="CLU_047887_0_0_1"/>
<dbReference type="InParanoid" id="O35180"/>
<dbReference type="OMA" id="NFLENDX"/>
<dbReference type="OrthoDB" id="443981at2759"/>
<dbReference type="PhylomeDB" id="O35180"/>
<dbReference type="Reactome" id="R-RNO-182971">
    <property type="pathway name" value="EGFR downregulation"/>
</dbReference>
<dbReference type="Reactome" id="R-RNO-6807004">
    <property type="pathway name" value="Negative regulation of MET activity"/>
</dbReference>
<dbReference type="Reactome" id="R-RNO-8856825">
    <property type="pathway name" value="Cargo recognition for clathrin-mediated endocytosis"/>
</dbReference>
<dbReference type="Reactome" id="R-RNO-8856828">
    <property type="pathway name" value="Clathrin-mediated endocytosis"/>
</dbReference>
<dbReference type="PRO" id="PR:O35180"/>
<dbReference type="Proteomes" id="UP000002494">
    <property type="component" value="Chromosome 1"/>
</dbReference>
<dbReference type="Bgee" id="ENSRNOG00000019776">
    <property type="expression patterns" value="Expressed in testis and 19 other cell types or tissues"/>
</dbReference>
<dbReference type="ExpressionAtlas" id="O35180">
    <property type="expression patterns" value="baseline and differential"/>
</dbReference>
<dbReference type="GO" id="GO:0001669">
    <property type="term" value="C:acrosomal vesicle"/>
    <property type="evidence" value="ECO:0000314"/>
    <property type="project" value="RGD"/>
</dbReference>
<dbReference type="GO" id="GO:0005737">
    <property type="term" value="C:cytoplasm"/>
    <property type="evidence" value="ECO:0000266"/>
    <property type="project" value="RGD"/>
</dbReference>
<dbReference type="GO" id="GO:0005829">
    <property type="term" value="C:cytosol"/>
    <property type="evidence" value="ECO:0000304"/>
    <property type="project" value="Reactome"/>
</dbReference>
<dbReference type="GO" id="GO:0005769">
    <property type="term" value="C:early endosome"/>
    <property type="evidence" value="ECO:0000314"/>
    <property type="project" value="CACAO"/>
</dbReference>
<dbReference type="GO" id="GO:0031901">
    <property type="term" value="C:early endosome membrane"/>
    <property type="evidence" value="ECO:0007669"/>
    <property type="project" value="UniProtKB-SubCell"/>
</dbReference>
<dbReference type="GO" id="GO:0098978">
    <property type="term" value="C:glutamatergic synapse"/>
    <property type="evidence" value="ECO:0000314"/>
    <property type="project" value="SynGO"/>
</dbReference>
<dbReference type="GO" id="GO:0099092">
    <property type="term" value="C:postsynaptic density, intracellular component"/>
    <property type="evidence" value="ECO:0000314"/>
    <property type="project" value="SynGO"/>
</dbReference>
<dbReference type="GO" id="GO:0098845">
    <property type="term" value="C:postsynaptic endosome"/>
    <property type="evidence" value="ECO:0000314"/>
    <property type="project" value="SynGO"/>
</dbReference>
<dbReference type="GO" id="GO:0098793">
    <property type="term" value="C:presynapse"/>
    <property type="evidence" value="ECO:0000314"/>
    <property type="project" value="RGD"/>
</dbReference>
<dbReference type="GO" id="GO:0042802">
    <property type="term" value="F:identical protein binding"/>
    <property type="evidence" value="ECO:0000266"/>
    <property type="project" value="RGD"/>
</dbReference>
<dbReference type="GO" id="GO:0008289">
    <property type="term" value="F:lipid binding"/>
    <property type="evidence" value="ECO:0007669"/>
    <property type="project" value="UniProtKB-KW"/>
</dbReference>
<dbReference type="GO" id="GO:0006897">
    <property type="term" value="P:endocytosis"/>
    <property type="evidence" value="ECO:0007669"/>
    <property type="project" value="UniProtKB-KW"/>
</dbReference>
<dbReference type="GO" id="GO:1900186">
    <property type="term" value="P:negative regulation of clathrin-dependent endocytosis"/>
    <property type="evidence" value="ECO:0000315"/>
    <property type="project" value="RGD"/>
</dbReference>
<dbReference type="GO" id="GO:0045666">
    <property type="term" value="P:positive regulation of neuron differentiation"/>
    <property type="evidence" value="ECO:0000315"/>
    <property type="project" value="RGD"/>
</dbReference>
<dbReference type="GO" id="GO:2000369">
    <property type="term" value="P:regulation of clathrin-dependent endocytosis"/>
    <property type="evidence" value="ECO:0000315"/>
    <property type="project" value="RGD"/>
</dbReference>
<dbReference type="CDD" id="cd07615">
    <property type="entry name" value="BAR_Endophilin_A3"/>
    <property type="match status" value="1"/>
</dbReference>
<dbReference type="CDD" id="cd11803">
    <property type="entry name" value="SH3_Endophilin_A"/>
    <property type="match status" value="1"/>
</dbReference>
<dbReference type="FunFam" id="2.30.30.40:FF:000053">
    <property type="entry name" value="endophilin-A1 isoform X2"/>
    <property type="match status" value="1"/>
</dbReference>
<dbReference type="FunFam" id="1.20.1270.60:FF:000021">
    <property type="entry name" value="Endophilin-A2 isoform 1"/>
    <property type="match status" value="1"/>
</dbReference>
<dbReference type="Gene3D" id="1.20.1270.60">
    <property type="entry name" value="Arfaptin homology (AH) domain/BAR domain"/>
    <property type="match status" value="1"/>
</dbReference>
<dbReference type="Gene3D" id="2.30.30.40">
    <property type="entry name" value="SH3 Domains"/>
    <property type="match status" value="1"/>
</dbReference>
<dbReference type="InterPro" id="IPR027267">
    <property type="entry name" value="AH/BAR_dom_sf"/>
</dbReference>
<dbReference type="InterPro" id="IPR004148">
    <property type="entry name" value="BAR_dom"/>
</dbReference>
<dbReference type="InterPro" id="IPR032469">
    <property type="entry name" value="Endophilin-A3_BAR"/>
</dbReference>
<dbReference type="InterPro" id="IPR035824">
    <property type="entry name" value="Endophilin_A_SH3"/>
</dbReference>
<dbReference type="InterPro" id="IPR050384">
    <property type="entry name" value="Endophilin_SH3RF"/>
</dbReference>
<dbReference type="InterPro" id="IPR036028">
    <property type="entry name" value="SH3-like_dom_sf"/>
</dbReference>
<dbReference type="InterPro" id="IPR001452">
    <property type="entry name" value="SH3_domain"/>
</dbReference>
<dbReference type="PANTHER" id="PTHR14167:SF45">
    <property type="entry name" value="ENDOPHILIN-A3"/>
    <property type="match status" value="1"/>
</dbReference>
<dbReference type="PANTHER" id="PTHR14167">
    <property type="entry name" value="SH3 DOMAIN-CONTAINING"/>
    <property type="match status" value="1"/>
</dbReference>
<dbReference type="Pfam" id="PF03114">
    <property type="entry name" value="BAR"/>
    <property type="match status" value="1"/>
</dbReference>
<dbReference type="Pfam" id="PF00018">
    <property type="entry name" value="SH3_1"/>
    <property type="match status" value="1"/>
</dbReference>
<dbReference type="PRINTS" id="PR00452">
    <property type="entry name" value="SH3DOMAIN"/>
</dbReference>
<dbReference type="SMART" id="SM00721">
    <property type="entry name" value="BAR"/>
    <property type="match status" value="1"/>
</dbReference>
<dbReference type="SMART" id="SM00326">
    <property type="entry name" value="SH3"/>
    <property type="match status" value="1"/>
</dbReference>
<dbReference type="SUPFAM" id="SSF103657">
    <property type="entry name" value="BAR/IMD domain-like"/>
    <property type="match status" value="1"/>
</dbReference>
<dbReference type="SUPFAM" id="SSF50044">
    <property type="entry name" value="SH3-domain"/>
    <property type="match status" value="1"/>
</dbReference>
<dbReference type="PROSITE" id="PS51021">
    <property type="entry name" value="BAR"/>
    <property type="match status" value="1"/>
</dbReference>
<dbReference type="PROSITE" id="PS50002">
    <property type="entry name" value="SH3"/>
    <property type="match status" value="1"/>
</dbReference>
<feature type="chain" id="PRO_0000146752" description="Endophilin-A3">
    <location>
        <begin position="1"/>
        <end position="347"/>
    </location>
</feature>
<feature type="domain" description="BAR" evidence="4">
    <location>
        <begin position="18"/>
        <end position="249"/>
    </location>
</feature>
<feature type="domain" description="SH3" evidence="3">
    <location>
        <begin position="285"/>
        <end position="344"/>
    </location>
</feature>
<feature type="region of interest" description="Membrane-binding amphipathic helix" evidence="1">
    <location>
        <begin position="1"/>
        <end position="21"/>
    </location>
</feature>
<feature type="region of interest" description="Required for dimerization upon membrane association" evidence="1">
    <location>
        <begin position="60"/>
        <end position="87"/>
    </location>
</feature>
<feature type="region of interest" description="Interaction with ARC" evidence="1">
    <location>
        <begin position="218"/>
        <end position="254"/>
    </location>
</feature>
<feature type="region of interest" description="Disordered" evidence="5">
    <location>
        <begin position="255"/>
        <end position="284"/>
    </location>
</feature>
<feature type="coiled-coil region" evidence="2">
    <location>
        <begin position="180"/>
        <end position="201"/>
    </location>
</feature>
<feature type="compositionally biased region" description="Polar residues" evidence="5">
    <location>
        <begin position="260"/>
        <end position="284"/>
    </location>
</feature>
<feature type="sequence conflict" description="In Ref. 2; AAC14884." evidence="9" ref="2">
    <original>D</original>
    <variation>H</variation>
    <location>
        <position position="107"/>
    </location>
</feature>
<comment type="function">
    <text evidence="6">Implicated in endocytosis. May recruit other proteins to membranes with high curvature.</text>
</comment>
<comment type="subunit">
    <text evidence="1 6 7 8">Interacts with SGIP1 and DYDC1 (By similarity). Interacts with FASLG. Interacts with ATXN2. Interacts with BIN2 (By similarity). Interacts with ARC, DNM1 and SYNJ1.</text>
</comment>
<comment type="interaction">
    <interactant intactId="EBI-1149266">
        <id>O35180</id>
    </interactant>
    <interactant intactId="EBI-80070">
        <id>P21575</id>
        <label>Dnm1</label>
    </interactant>
    <organismsDiffer>false</organismsDiffer>
    <experiments>2</experiments>
</comment>
<comment type="interaction">
    <interactant intactId="EBI-1149266">
        <id>O35180</id>
    </interactant>
    <interactant intactId="EBI-1149123">
        <id>Q62910</id>
        <label>Synj1</label>
    </interactant>
    <organismsDiffer>false</organismsDiffer>
    <experiments>2</experiments>
</comment>
<comment type="subcellular location">
    <subcellularLocation>
        <location evidence="7 8">Cytoplasm</location>
    </subcellularLocation>
    <subcellularLocation>
        <location evidence="7">Early endosome membrane</location>
        <topology evidence="10">Peripheral membrane protein</topology>
    </subcellularLocation>
    <text evidence="7">Associated with postsynaptic endosomes in hippocampal neurons. Associated with presynaptic endosomes in olfactory neurons.</text>
</comment>
<comment type="tissue specificity">
    <text evidence="6 8">Expressed at high level in testis and at lower level in brain and liver.</text>
</comment>
<comment type="domain">
    <text evidence="1">An N-terminal amphipathic helix, the BAR domain and a second amphipathic helix inserted into helix 1 of the BAR domain (N-BAR domain) induce membrane curvature and bind curved membranes.</text>
</comment>
<comment type="miscellaneous">
    <text>Cells overexpressing Sh3gl3 show inhibition of transferrin uptake. Olfactory epithelium-derived cells overexpressing SH3GL3, DRD2 and GRK2 show accelerated differentiation upon addition of apomorphine due to reduced agonist-induced endocytosis of DRD2.</text>
</comment>
<comment type="similarity">
    <text evidence="9">Belongs to the endophilin family.</text>
</comment>
<proteinExistence type="evidence at protein level"/>
<protein>
    <recommendedName>
        <fullName>Endophilin-A3</fullName>
    </recommendedName>
    <alternativeName>
        <fullName>Endophilin-3</fullName>
    </alternativeName>
    <alternativeName>
        <fullName>SH3 domain protein 2C</fullName>
    </alternativeName>
    <alternativeName>
        <fullName>SH3 domain-containing GRB2-like protein 3</fullName>
    </alternativeName>
    <alternativeName>
        <fullName>SH3p13</fullName>
    </alternativeName>
</protein>